<name>SRP19_METS3</name>
<organism>
    <name type="scientific">Methanobrevibacter smithii (strain ATCC 35061 / DSM 861 / OCM 144 / PS)</name>
    <dbReference type="NCBI Taxonomy" id="420247"/>
    <lineage>
        <taxon>Archaea</taxon>
        <taxon>Methanobacteriati</taxon>
        <taxon>Methanobacteriota</taxon>
        <taxon>Methanomada group</taxon>
        <taxon>Methanobacteria</taxon>
        <taxon>Methanobacteriales</taxon>
        <taxon>Methanobacteriaceae</taxon>
        <taxon>Methanobrevibacter</taxon>
    </lineage>
</organism>
<keyword id="KW-0963">Cytoplasm</keyword>
<keyword id="KW-0687">Ribonucleoprotein</keyword>
<keyword id="KW-0694">RNA-binding</keyword>
<keyword id="KW-0733">Signal recognition particle</keyword>
<proteinExistence type="inferred from homology"/>
<dbReference type="EMBL" id="CP000678">
    <property type="protein sequence ID" value="ABQ87706.1"/>
    <property type="molecule type" value="Genomic_DNA"/>
</dbReference>
<dbReference type="RefSeq" id="WP_004033388.1">
    <property type="nucleotide sequence ID" value="NZ_CP117965.1"/>
</dbReference>
<dbReference type="SMR" id="A5UNC8"/>
<dbReference type="STRING" id="420247.Msm_1501"/>
<dbReference type="EnsemblBacteria" id="ABQ87706">
    <property type="protein sequence ID" value="ABQ87706"/>
    <property type="gene ID" value="Msm_1501"/>
</dbReference>
<dbReference type="KEGG" id="msi:Msm_1501"/>
<dbReference type="PATRIC" id="fig|420247.28.peg.1494"/>
<dbReference type="eggNOG" id="arCOG01217">
    <property type="taxonomic scope" value="Archaea"/>
</dbReference>
<dbReference type="HOGENOM" id="CLU_169299_1_0_2"/>
<dbReference type="Proteomes" id="UP000001992">
    <property type="component" value="Chromosome"/>
</dbReference>
<dbReference type="GO" id="GO:0048500">
    <property type="term" value="C:signal recognition particle"/>
    <property type="evidence" value="ECO:0007669"/>
    <property type="project" value="UniProtKB-UniRule"/>
</dbReference>
<dbReference type="GO" id="GO:0008312">
    <property type="term" value="F:7S RNA binding"/>
    <property type="evidence" value="ECO:0007669"/>
    <property type="project" value="UniProtKB-UniRule"/>
</dbReference>
<dbReference type="GO" id="GO:0006617">
    <property type="term" value="P:SRP-dependent cotranslational protein targeting to membrane, signal sequence recognition"/>
    <property type="evidence" value="ECO:0007669"/>
    <property type="project" value="TreeGrafter"/>
</dbReference>
<dbReference type="Gene3D" id="3.30.56.30">
    <property type="entry name" value="Signal recognition particle, SRP19-like subunit"/>
    <property type="match status" value="1"/>
</dbReference>
<dbReference type="HAMAP" id="MF_00305">
    <property type="entry name" value="SRP19"/>
    <property type="match status" value="1"/>
</dbReference>
<dbReference type="InterPro" id="IPR002778">
    <property type="entry name" value="Signal_recog_particle_SRP19"/>
</dbReference>
<dbReference type="InterPro" id="IPR036521">
    <property type="entry name" value="SRP19-like_sf"/>
</dbReference>
<dbReference type="InterPro" id="IPR022938">
    <property type="entry name" value="SRP19_arc-type"/>
</dbReference>
<dbReference type="PANTHER" id="PTHR17453">
    <property type="entry name" value="SIGNAL RECOGNITION PARTICLE 19 KD PROTEIN"/>
    <property type="match status" value="1"/>
</dbReference>
<dbReference type="PANTHER" id="PTHR17453:SF0">
    <property type="entry name" value="SIGNAL RECOGNITION PARTICLE 19 KDA PROTEIN"/>
    <property type="match status" value="1"/>
</dbReference>
<dbReference type="Pfam" id="PF01922">
    <property type="entry name" value="SRP19"/>
    <property type="match status" value="1"/>
</dbReference>
<dbReference type="SUPFAM" id="SSF69695">
    <property type="entry name" value="SRP19"/>
    <property type="match status" value="1"/>
</dbReference>
<reference key="1">
    <citation type="journal article" date="2007" name="Proc. Natl. Acad. Sci. U.S.A.">
        <title>Genomic and metabolic adaptations of Methanobrevibacter smithii to the human gut.</title>
        <authorList>
            <person name="Samuel B.S."/>
            <person name="Hansen E.E."/>
            <person name="Manchester J.K."/>
            <person name="Coutinho P.M."/>
            <person name="Henrissat B."/>
            <person name="Fulton R."/>
            <person name="Latreille P."/>
            <person name="Kim K."/>
            <person name="Wilson R.K."/>
            <person name="Gordon J.I."/>
        </authorList>
    </citation>
    <scope>NUCLEOTIDE SEQUENCE [LARGE SCALE GENOMIC DNA]</scope>
    <source>
        <strain>ATCC 35061 / DSM 861 / OCM 144 / PS</strain>
    </source>
</reference>
<comment type="function">
    <text evidence="1">Involved in targeting and insertion of nascent membrane proteins into the cytoplasmic membrane. Binds directly to 7S RNA and mediates binding of the 54 kDa subunit of the SRP.</text>
</comment>
<comment type="subunit">
    <text evidence="1">Part of the signal recognition particle protein translocation system, which is composed of SRP and FtsY. Archaeal SRP consists of a 7S RNA molecule of 300 nucleotides and two protein subunits: SRP54 and SRP19.</text>
</comment>
<comment type="subcellular location">
    <subcellularLocation>
        <location evidence="1">Cytoplasm</location>
    </subcellularLocation>
</comment>
<comment type="similarity">
    <text evidence="1">Belongs to the SRP19 family.</text>
</comment>
<feature type="chain" id="PRO_0000322224" description="Signal recognition particle 19 kDa protein">
    <location>
        <begin position="1"/>
        <end position="89"/>
    </location>
</feature>
<gene>
    <name evidence="1" type="primary">srp19</name>
    <name type="ordered locus">Msm_1501</name>
</gene>
<evidence type="ECO:0000255" key="1">
    <source>
        <dbReference type="HAMAP-Rule" id="MF_00305"/>
    </source>
</evidence>
<protein>
    <recommendedName>
        <fullName evidence="1">Signal recognition particle 19 kDa protein</fullName>
        <shortName evidence="1">SRP19</shortName>
    </recommendedName>
</protein>
<accession>A5UNC8</accession>
<sequence>MITVWPQYLDKNLSLNEGRKVSKEIAVEEPKLQDIEKALKRLNLPYSTQKERSYPGKWYEKSGRILVESDKPKLELLKEISLKLQEIKQ</sequence>